<sequence>MTTMQLDSDGRLRHLLTLEGLPRTTLLQLLDRAGQIRDAAVGRVGKRSVLAGTAVCTLFFEPSTRTRSSFHLAAQRLGADVLNFDASTSSTRKGETARDTLKNLEAMGVRGFVVRHPDDGAVEALAAAAGEGTALINAGDGRSAHPTQGLLDMLTLRQAKGTDFSKLKVVIVGDVKHSRVARSDLHALRTLGAGEIRVCGPVSLLPDDGMLEGCVVGQDFDAMLEGADALMMLRLQRERMEEGLVPSLEQYHTEYGLTCERLARAGRDAAVLHPGPINRGVEITDEVADGAQSCVLRQVANGVAVRMAVLETLLG</sequence>
<organism>
    <name type="scientific">Xanthomonas axonopodis pv. citri (strain 306)</name>
    <dbReference type="NCBI Taxonomy" id="190486"/>
    <lineage>
        <taxon>Bacteria</taxon>
        <taxon>Pseudomonadati</taxon>
        <taxon>Pseudomonadota</taxon>
        <taxon>Gammaproteobacteria</taxon>
        <taxon>Lysobacterales</taxon>
        <taxon>Lysobacteraceae</taxon>
        <taxon>Xanthomonas</taxon>
    </lineage>
</organism>
<dbReference type="EC" id="2.1.3.2" evidence="1"/>
<dbReference type="EMBL" id="AE008923">
    <property type="protein sequence ID" value="AAM37761.1"/>
    <property type="molecule type" value="Genomic_DNA"/>
</dbReference>
<dbReference type="RefSeq" id="WP_011051922.1">
    <property type="nucleotide sequence ID" value="NC_003919.1"/>
</dbReference>
<dbReference type="SMR" id="Q8PII1"/>
<dbReference type="KEGG" id="xac:XAC2916"/>
<dbReference type="eggNOG" id="COG0540">
    <property type="taxonomic scope" value="Bacteria"/>
</dbReference>
<dbReference type="HOGENOM" id="CLU_043846_2_0_6"/>
<dbReference type="UniPathway" id="UPA00070">
    <property type="reaction ID" value="UER00116"/>
</dbReference>
<dbReference type="Proteomes" id="UP000000576">
    <property type="component" value="Chromosome"/>
</dbReference>
<dbReference type="GO" id="GO:0005829">
    <property type="term" value="C:cytosol"/>
    <property type="evidence" value="ECO:0007669"/>
    <property type="project" value="TreeGrafter"/>
</dbReference>
<dbReference type="GO" id="GO:0016597">
    <property type="term" value="F:amino acid binding"/>
    <property type="evidence" value="ECO:0007669"/>
    <property type="project" value="InterPro"/>
</dbReference>
<dbReference type="GO" id="GO:0004070">
    <property type="term" value="F:aspartate carbamoyltransferase activity"/>
    <property type="evidence" value="ECO:0007669"/>
    <property type="project" value="UniProtKB-UniRule"/>
</dbReference>
<dbReference type="GO" id="GO:0006207">
    <property type="term" value="P:'de novo' pyrimidine nucleobase biosynthetic process"/>
    <property type="evidence" value="ECO:0007669"/>
    <property type="project" value="InterPro"/>
</dbReference>
<dbReference type="GO" id="GO:0044205">
    <property type="term" value="P:'de novo' UMP biosynthetic process"/>
    <property type="evidence" value="ECO:0007669"/>
    <property type="project" value="UniProtKB-UniRule"/>
</dbReference>
<dbReference type="GO" id="GO:0006520">
    <property type="term" value="P:amino acid metabolic process"/>
    <property type="evidence" value="ECO:0007669"/>
    <property type="project" value="InterPro"/>
</dbReference>
<dbReference type="FunFam" id="3.40.50.1370:FF:000007">
    <property type="entry name" value="Aspartate carbamoyltransferase"/>
    <property type="match status" value="1"/>
</dbReference>
<dbReference type="FunFam" id="3.40.50.1370:FF:000019">
    <property type="entry name" value="Aspartate carbamoyltransferase"/>
    <property type="match status" value="1"/>
</dbReference>
<dbReference type="Gene3D" id="3.40.50.1370">
    <property type="entry name" value="Aspartate/ornithine carbamoyltransferase"/>
    <property type="match status" value="2"/>
</dbReference>
<dbReference type="HAMAP" id="MF_00001">
    <property type="entry name" value="Asp_carb_tr"/>
    <property type="match status" value="1"/>
</dbReference>
<dbReference type="InterPro" id="IPR006132">
    <property type="entry name" value="Asp/Orn_carbamoyltranf_P-bd"/>
</dbReference>
<dbReference type="InterPro" id="IPR006130">
    <property type="entry name" value="Asp/Orn_carbamoylTrfase"/>
</dbReference>
<dbReference type="InterPro" id="IPR036901">
    <property type="entry name" value="Asp/Orn_carbamoylTrfase_sf"/>
</dbReference>
<dbReference type="InterPro" id="IPR002082">
    <property type="entry name" value="Asp_carbamoyltransf"/>
</dbReference>
<dbReference type="InterPro" id="IPR006131">
    <property type="entry name" value="Asp_carbamoyltransf_Asp/Orn-bd"/>
</dbReference>
<dbReference type="NCBIfam" id="TIGR00670">
    <property type="entry name" value="asp_carb_tr"/>
    <property type="match status" value="1"/>
</dbReference>
<dbReference type="NCBIfam" id="NF002032">
    <property type="entry name" value="PRK00856.1"/>
    <property type="match status" value="1"/>
</dbReference>
<dbReference type="PANTHER" id="PTHR45753:SF6">
    <property type="entry name" value="ASPARTATE CARBAMOYLTRANSFERASE"/>
    <property type="match status" value="1"/>
</dbReference>
<dbReference type="PANTHER" id="PTHR45753">
    <property type="entry name" value="ORNITHINE CARBAMOYLTRANSFERASE, MITOCHONDRIAL"/>
    <property type="match status" value="1"/>
</dbReference>
<dbReference type="Pfam" id="PF00185">
    <property type="entry name" value="OTCace"/>
    <property type="match status" value="1"/>
</dbReference>
<dbReference type="Pfam" id="PF02729">
    <property type="entry name" value="OTCace_N"/>
    <property type="match status" value="1"/>
</dbReference>
<dbReference type="PRINTS" id="PR00100">
    <property type="entry name" value="AOTCASE"/>
</dbReference>
<dbReference type="PRINTS" id="PR00101">
    <property type="entry name" value="ATCASE"/>
</dbReference>
<dbReference type="SUPFAM" id="SSF53671">
    <property type="entry name" value="Aspartate/ornithine carbamoyltransferase"/>
    <property type="match status" value="1"/>
</dbReference>
<dbReference type="PROSITE" id="PS00097">
    <property type="entry name" value="CARBAMOYLTRANSFERASE"/>
    <property type="match status" value="1"/>
</dbReference>
<feature type="chain" id="PRO_0000113232" description="Aspartate carbamoyltransferase catalytic subunit">
    <location>
        <begin position="1"/>
        <end position="315"/>
    </location>
</feature>
<feature type="binding site" evidence="1">
    <location>
        <position position="65"/>
    </location>
    <ligand>
        <name>carbamoyl phosphate</name>
        <dbReference type="ChEBI" id="CHEBI:58228"/>
    </ligand>
</feature>
<feature type="binding site" evidence="1">
    <location>
        <position position="66"/>
    </location>
    <ligand>
        <name>carbamoyl phosphate</name>
        <dbReference type="ChEBI" id="CHEBI:58228"/>
    </ligand>
</feature>
<feature type="binding site" evidence="1">
    <location>
        <position position="93"/>
    </location>
    <ligand>
        <name>L-aspartate</name>
        <dbReference type="ChEBI" id="CHEBI:29991"/>
    </ligand>
</feature>
<feature type="binding site" evidence="1">
    <location>
        <position position="115"/>
    </location>
    <ligand>
        <name>carbamoyl phosphate</name>
        <dbReference type="ChEBI" id="CHEBI:58228"/>
    </ligand>
</feature>
<feature type="binding site" evidence="1">
    <location>
        <position position="145"/>
    </location>
    <ligand>
        <name>carbamoyl phosphate</name>
        <dbReference type="ChEBI" id="CHEBI:58228"/>
    </ligand>
</feature>
<feature type="binding site" evidence="1">
    <location>
        <position position="148"/>
    </location>
    <ligand>
        <name>carbamoyl phosphate</name>
        <dbReference type="ChEBI" id="CHEBI:58228"/>
    </ligand>
</feature>
<feature type="binding site" evidence="1">
    <location>
        <position position="179"/>
    </location>
    <ligand>
        <name>L-aspartate</name>
        <dbReference type="ChEBI" id="CHEBI:29991"/>
    </ligand>
</feature>
<feature type="binding site" evidence="1">
    <location>
        <position position="234"/>
    </location>
    <ligand>
        <name>L-aspartate</name>
        <dbReference type="ChEBI" id="CHEBI:29991"/>
    </ligand>
</feature>
<feature type="binding site" evidence="1">
    <location>
        <position position="275"/>
    </location>
    <ligand>
        <name>carbamoyl phosphate</name>
        <dbReference type="ChEBI" id="CHEBI:58228"/>
    </ligand>
</feature>
<feature type="binding site" evidence="1">
    <location>
        <position position="276"/>
    </location>
    <ligand>
        <name>carbamoyl phosphate</name>
        <dbReference type="ChEBI" id="CHEBI:58228"/>
    </ligand>
</feature>
<keyword id="KW-0665">Pyrimidine biosynthesis</keyword>
<keyword id="KW-0808">Transferase</keyword>
<protein>
    <recommendedName>
        <fullName evidence="1">Aspartate carbamoyltransferase catalytic subunit</fullName>
        <ecNumber evidence="1">2.1.3.2</ecNumber>
    </recommendedName>
    <alternativeName>
        <fullName evidence="1">Aspartate transcarbamylase</fullName>
        <shortName evidence="1">ATCase</shortName>
    </alternativeName>
</protein>
<gene>
    <name evidence="1" type="primary">pyrB</name>
    <name type="ordered locus">XAC2916</name>
</gene>
<proteinExistence type="inferred from homology"/>
<reference key="1">
    <citation type="journal article" date="2002" name="Nature">
        <title>Comparison of the genomes of two Xanthomonas pathogens with differing host specificities.</title>
        <authorList>
            <person name="da Silva A.C.R."/>
            <person name="Ferro J.A."/>
            <person name="Reinach F.C."/>
            <person name="Farah C.S."/>
            <person name="Furlan L.R."/>
            <person name="Quaggio R.B."/>
            <person name="Monteiro-Vitorello C.B."/>
            <person name="Van Sluys M.A."/>
            <person name="Almeida N.F. Jr."/>
            <person name="Alves L.M.C."/>
            <person name="do Amaral A.M."/>
            <person name="Bertolini M.C."/>
            <person name="Camargo L.E.A."/>
            <person name="Camarotte G."/>
            <person name="Cannavan F."/>
            <person name="Cardozo J."/>
            <person name="Chambergo F."/>
            <person name="Ciapina L.P."/>
            <person name="Cicarelli R.M.B."/>
            <person name="Coutinho L.L."/>
            <person name="Cursino-Santos J.R."/>
            <person name="El-Dorry H."/>
            <person name="Faria J.B."/>
            <person name="Ferreira A.J.S."/>
            <person name="Ferreira R.C.C."/>
            <person name="Ferro M.I.T."/>
            <person name="Formighieri E.F."/>
            <person name="Franco M.C."/>
            <person name="Greggio C.C."/>
            <person name="Gruber A."/>
            <person name="Katsuyama A.M."/>
            <person name="Kishi L.T."/>
            <person name="Leite R.P."/>
            <person name="Lemos E.G.M."/>
            <person name="Lemos M.V.F."/>
            <person name="Locali E.C."/>
            <person name="Machado M.A."/>
            <person name="Madeira A.M.B.N."/>
            <person name="Martinez-Rossi N.M."/>
            <person name="Martins E.C."/>
            <person name="Meidanis J."/>
            <person name="Menck C.F.M."/>
            <person name="Miyaki C.Y."/>
            <person name="Moon D.H."/>
            <person name="Moreira L.M."/>
            <person name="Novo M.T.M."/>
            <person name="Okura V.K."/>
            <person name="Oliveira M.C."/>
            <person name="Oliveira V.R."/>
            <person name="Pereira H.A."/>
            <person name="Rossi A."/>
            <person name="Sena J.A.D."/>
            <person name="Silva C."/>
            <person name="de Souza R.F."/>
            <person name="Spinola L.A.F."/>
            <person name="Takita M.A."/>
            <person name="Tamura R.E."/>
            <person name="Teixeira E.C."/>
            <person name="Tezza R.I.D."/>
            <person name="Trindade dos Santos M."/>
            <person name="Truffi D."/>
            <person name="Tsai S.M."/>
            <person name="White F.F."/>
            <person name="Setubal J.C."/>
            <person name="Kitajima J.P."/>
        </authorList>
    </citation>
    <scope>NUCLEOTIDE SEQUENCE [LARGE SCALE GENOMIC DNA]</scope>
    <source>
        <strain>306</strain>
    </source>
</reference>
<accession>Q8PII1</accession>
<name>PYRB_XANAC</name>
<comment type="function">
    <text evidence="1">Catalyzes the condensation of carbamoyl phosphate and aspartate to form carbamoyl aspartate and inorganic phosphate, the committed step in the de novo pyrimidine nucleotide biosynthesis pathway.</text>
</comment>
<comment type="catalytic activity">
    <reaction evidence="1">
        <text>carbamoyl phosphate + L-aspartate = N-carbamoyl-L-aspartate + phosphate + H(+)</text>
        <dbReference type="Rhea" id="RHEA:20013"/>
        <dbReference type="ChEBI" id="CHEBI:15378"/>
        <dbReference type="ChEBI" id="CHEBI:29991"/>
        <dbReference type="ChEBI" id="CHEBI:32814"/>
        <dbReference type="ChEBI" id="CHEBI:43474"/>
        <dbReference type="ChEBI" id="CHEBI:58228"/>
        <dbReference type="EC" id="2.1.3.2"/>
    </reaction>
</comment>
<comment type="pathway">
    <text evidence="1">Pyrimidine metabolism; UMP biosynthesis via de novo pathway; (S)-dihydroorotate from bicarbonate: step 2/3.</text>
</comment>
<comment type="subunit">
    <text evidence="1">Heterododecamer (2C3:3R2) of six catalytic PyrB chains organized as two trimers (C3), and six regulatory PyrI chains organized as three dimers (R2).</text>
</comment>
<comment type="similarity">
    <text evidence="1">Belongs to the aspartate/ornithine carbamoyltransferase superfamily. ATCase family.</text>
</comment>
<evidence type="ECO:0000255" key="1">
    <source>
        <dbReference type="HAMAP-Rule" id="MF_00001"/>
    </source>
</evidence>